<feature type="chain" id="PRO_1000196017" description="Large ribosomal subunit protein bL34">
    <location>
        <begin position="1"/>
        <end position="44"/>
    </location>
</feature>
<proteinExistence type="inferred from homology"/>
<name>RL34_PARPJ</name>
<organism>
    <name type="scientific">Paraburkholderia phytofirmans (strain DSM 17436 / LMG 22146 / PsJN)</name>
    <name type="common">Burkholderia phytofirmans</name>
    <dbReference type="NCBI Taxonomy" id="398527"/>
    <lineage>
        <taxon>Bacteria</taxon>
        <taxon>Pseudomonadati</taxon>
        <taxon>Pseudomonadota</taxon>
        <taxon>Betaproteobacteria</taxon>
        <taxon>Burkholderiales</taxon>
        <taxon>Burkholderiaceae</taxon>
        <taxon>Paraburkholderia</taxon>
    </lineage>
</organism>
<comment type="similarity">
    <text evidence="1">Belongs to the bacterial ribosomal protein bL34 family.</text>
</comment>
<dbReference type="EMBL" id="CP001052">
    <property type="protein sequence ID" value="ACD18375.1"/>
    <property type="molecule type" value="Genomic_DNA"/>
</dbReference>
<dbReference type="RefSeq" id="WP_004198824.1">
    <property type="nucleotide sequence ID" value="NC_010681.1"/>
</dbReference>
<dbReference type="SMR" id="B2T7U4"/>
<dbReference type="STRING" id="398527.Bphyt_3989"/>
<dbReference type="GeneID" id="98107775"/>
<dbReference type="KEGG" id="bpy:Bphyt_3989"/>
<dbReference type="eggNOG" id="COG0230">
    <property type="taxonomic scope" value="Bacteria"/>
</dbReference>
<dbReference type="HOGENOM" id="CLU_129938_2_0_4"/>
<dbReference type="OrthoDB" id="9804164at2"/>
<dbReference type="Proteomes" id="UP000001739">
    <property type="component" value="Chromosome 1"/>
</dbReference>
<dbReference type="GO" id="GO:1990904">
    <property type="term" value="C:ribonucleoprotein complex"/>
    <property type="evidence" value="ECO:0007669"/>
    <property type="project" value="UniProtKB-KW"/>
</dbReference>
<dbReference type="GO" id="GO:0005840">
    <property type="term" value="C:ribosome"/>
    <property type="evidence" value="ECO:0007669"/>
    <property type="project" value="UniProtKB-KW"/>
</dbReference>
<dbReference type="GO" id="GO:0003735">
    <property type="term" value="F:structural constituent of ribosome"/>
    <property type="evidence" value="ECO:0007669"/>
    <property type="project" value="InterPro"/>
</dbReference>
<dbReference type="GO" id="GO:0006412">
    <property type="term" value="P:translation"/>
    <property type="evidence" value="ECO:0007669"/>
    <property type="project" value="UniProtKB-UniRule"/>
</dbReference>
<dbReference type="FunFam" id="1.10.287.3980:FF:000001">
    <property type="entry name" value="Mitochondrial ribosomal protein L34"/>
    <property type="match status" value="1"/>
</dbReference>
<dbReference type="Gene3D" id="1.10.287.3980">
    <property type="match status" value="1"/>
</dbReference>
<dbReference type="HAMAP" id="MF_00391">
    <property type="entry name" value="Ribosomal_bL34"/>
    <property type="match status" value="1"/>
</dbReference>
<dbReference type="InterPro" id="IPR000271">
    <property type="entry name" value="Ribosomal_bL34"/>
</dbReference>
<dbReference type="InterPro" id="IPR020939">
    <property type="entry name" value="Ribosomal_bL34_CS"/>
</dbReference>
<dbReference type="NCBIfam" id="TIGR01030">
    <property type="entry name" value="rpmH_bact"/>
    <property type="match status" value="1"/>
</dbReference>
<dbReference type="PANTHER" id="PTHR14503:SF4">
    <property type="entry name" value="LARGE RIBOSOMAL SUBUNIT PROTEIN BL34M"/>
    <property type="match status" value="1"/>
</dbReference>
<dbReference type="PANTHER" id="PTHR14503">
    <property type="entry name" value="MITOCHONDRIAL RIBOSOMAL PROTEIN 34 FAMILY MEMBER"/>
    <property type="match status" value="1"/>
</dbReference>
<dbReference type="Pfam" id="PF00468">
    <property type="entry name" value="Ribosomal_L34"/>
    <property type="match status" value="1"/>
</dbReference>
<dbReference type="PROSITE" id="PS00784">
    <property type="entry name" value="RIBOSOMAL_L34"/>
    <property type="match status" value="1"/>
</dbReference>
<keyword id="KW-0687">Ribonucleoprotein</keyword>
<keyword id="KW-0689">Ribosomal protein</keyword>
<reference key="1">
    <citation type="journal article" date="2011" name="J. Bacteriol.">
        <title>Complete genome sequence of the plant growth-promoting endophyte Burkholderia phytofirmans strain PsJN.</title>
        <authorList>
            <person name="Weilharter A."/>
            <person name="Mitter B."/>
            <person name="Shin M.V."/>
            <person name="Chain P.S."/>
            <person name="Nowak J."/>
            <person name="Sessitsch A."/>
        </authorList>
    </citation>
    <scope>NUCLEOTIDE SEQUENCE [LARGE SCALE GENOMIC DNA]</scope>
    <source>
        <strain>DSM 17436 / LMG 22146 / PsJN</strain>
    </source>
</reference>
<evidence type="ECO:0000255" key="1">
    <source>
        <dbReference type="HAMAP-Rule" id="MF_00391"/>
    </source>
</evidence>
<evidence type="ECO:0000305" key="2"/>
<gene>
    <name evidence="1" type="primary">rpmH</name>
    <name type="ordered locus">Bphyt_3989</name>
</gene>
<sequence>MKRTYQPSVTRRKRTHGFRVRMKTAGGRKVINARRAKGRKRLAI</sequence>
<protein>
    <recommendedName>
        <fullName evidence="1">Large ribosomal subunit protein bL34</fullName>
    </recommendedName>
    <alternativeName>
        <fullName evidence="2">50S ribosomal protein L34</fullName>
    </alternativeName>
</protein>
<accession>B2T7U4</accession>